<organism>
    <name type="scientific">Pseudomonas putida (strain W619)</name>
    <dbReference type="NCBI Taxonomy" id="390235"/>
    <lineage>
        <taxon>Bacteria</taxon>
        <taxon>Pseudomonadati</taxon>
        <taxon>Pseudomonadota</taxon>
        <taxon>Gammaproteobacteria</taxon>
        <taxon>Pseudomonadales</taxon>
        <taxon>Pseudomonadaceae</taxon>
        <taxon>Pseudomonas</taxon>
    </lineage>
</organism>
<proteinExistence type="inferred from homology"/>
<evidence type="ECO:0000255" key="1">
    <source>
        <dbReference type="HAMAP-Rule" id="MF_00016"/>
    </source>
</evidence>
<keyword id="KW-0067">ATP-binding</keyword>
<keyword id="KW-0963">Cytoplasm</keyword>
<keyword id="KW-0227">DNA damage</keyword>
<keyword id="KW-0233">DNA recombination</keyword>
<keyword id="KW-0234">DNA repair</keyword>
<keyword id="KW-0238">DNA-binding</keyword>
<keyword id="KW-0378">Hydrolase</keyword>
<keyword id="KW-0547">Nucleotide-binding</keyword>
<feature type="chain" id="PRO_1000089665" description="Holliday junction branch migration complex subunit RuvB">
    <location>
        <begin position="1"/>
        <end position="348"/>
    </location>
</feature>
<feature type="region of interest" description="Large ATPase domain (RuvB-L)" evidence="1">
    <location>
        <begin position="4"/>
        <end position="184"/>
    </location>
</feature>
<feature type="region of interest" description="Small ATPAse domain (RuvB-S)" evidence="1">
    <location>
        <begin position="185"/>
        <end position="255"/>
    </location>
</feature>
<feature type="region of interest" description="Head domain (RuvB-H)" evidence="1">
    <location>
        <begin position="258"/>
        <end position="348"/>
    </location>
</feature>
<feature type="binding site" evidence="1">
    <location>
        <position position="23"/>
    </location>
    <ligand>
        <name>ATP</name>
        <dbReference type="ChEBI" id="CHEBI:30616"/>
    </ligand>
</feature>
<feature type="binding site" evidence="1">
    <location>
        <position position="24"/>
    </location>
    <ligand>
        <name>ATP</name>
        <dbReference type="ChEBI" id="CHEBI:30616"/>
    </ligand>
</feature>
<feature type="binding site" evidence="1">
    <location>
        <position position="65"/>
    </location>
    <ligand>
        <name>ATP</name>
        <dbReference type="ChEBI" id="CHEBI:30616"/>
    </ligand>
</feature>
<feature type="binding site" evidence="1">
    <location>
        <position position="68"/>
    </location>
    <ligand>
        <name>ATP</name>
        <dbReference type="ChEBI" id="CHEBI:30616"/>
    </ligand>
</feature>
<feature type="binding site" evidence="1">
    <location>
        <position position="69"/>
    </location>
    <ligand>
        <name>ATP</name>
        <dbReference type="ChEBI" id="CHEBI:30616"/>
    </ligand>
</feature>
<feature type="binding site" evidence="1">
    <location>
        <position position="69"/>
    </location>
    <ligand>
        <name>Mg(2+)</name>
        <dbReference type="ChEBI" id="CHEBI:18420"/>
    </ligand>
</feature>
<feature type="binding site" evidence="1">
    <location>
        <position position="70"/>
    </location>
    <ligand>
        <name>ATP</name>
        <dbReference type="ChEBI" id="CHEBI:30616"/>
    </ligand>
</feature>
<feature type="binding site" evidence="1">
    <location>
        <begin position="131"/>
        <end position="133"/>
    </location>
    <ligand>
        <name>ATP</name>
        <dbReference type="ChEBI" id="CHEBI:30616"/>
    </ligand>
</feature>
<feature type="binding site" evidence="1">
    <location>
        <position position="174"/>
    </location>
    <ligand>
        <name>ATP</name>
        <dbReference type="ChEBI" id="CHEBI:30616"/>
    </ligand>
</feature>
<feature type="binding site" evidence="1">
    <location>
        <position position="184"/>
    </location>
    <ligand>
        <name>ATP</name>
        <dbReference type="ChEBI" id="CHEBI:30616"/>
    </ligand>
</feature>
<feature type="binding site" evidence="1">
    <location>
        <position position="221"/>
    </location>
    <ligand>
        <name>ATP</name>
        <dbReference type="ChEBI" id="CHEBI:30616"/>
    </ligand>
</feature>
<feature type="binding site" evidence="1">
    <location>
        <position position="294"/>
    </location>
    <ligand>
        <name>DNA</name>
        <dbReference type="ChEBI" id="CHEBI:16991"/>
    </ligand>
</feature>
<feature type="binding site" evidence="1">
    <location>
        <position position="313"/>
    </location>
    <ligand>
        <name>DNA</name>
        <dbReference type="ChEBI" id="CHEBI:16991"/>
    </ligand>
</feature>
<feature type="binding site" evidence="1">
    <location>
        <position position="318"/>
    </location>
    <ligand>
        <name>DNA</name>
        <dbReference type="ChEBI" id="CHEBI:16991"/>
    </ligand>
</feature>
<comment type="function">
    <text evidence="1">The RuvA-RuvB-RuvC complex processes Holliday junction (HJ) DNA during genetic recombination and DNA repair, while the RuvA-RuvB complex plays an important role in the rescue of blocked DNA replication forks via replication fork reversal (RFR). RuvA specifically binds to HJ cruciform DNA, conferring on it an open structure. The RuvB hexamer acts as an ATP-dependent pump, pulling dsDNA into and through the RuvAB complex. RuvB forms 2 homohexamers on either side of HJ DNA bound by 1 or 2 RuvA tetramers; 4 subunits per hexamer contact DNA at a time. Coordinated motions by a converter formed by DNA-disengaged RuvB subunits stimulates ATP hydrolysis and nucleotide exchange. Immobilization of the converter enables RuvB to convert the ATP-contained energy into a lever motion, pulling 2 nucleotides of DNA out of the RuvA tetramer per ATP hydrolyzed, thus driving DNA branch migration. The RuvB motors rotate together with the DNA substrate, which together with the progressing nucleotide cycle form the mechanistic basis for DNA recombination by continuous HJ branch migration. Branch migration allows RuvC to scan DNA until it finds its consensus sequence, where it cleaves and resolves cruciform DNA.</text>
</comment>
<comment type="catalytic activity">
    <reaction evidence="1">
        <text>ATP + H2O = ADP + phosphate + H(+)</text>
        <dbReference type="Rhea" id="RHEA:13065"/>
        <dbReference type="ChEBI" id="CHEBI:15377"/>
        <dbReference type="ChEBI" id="CHEBI:15378"/>
        <dbReference type="ChEBI" id="CHEBI:30616"/>
        <dbReference type="ChEBI" id="CHEBI:43474"/>
        <dbReference type="ChEBI" id="CHEBI:456216"/>
    </reaction>
</comment>
<comment type="subunit">
    <text evidence="1">Homohexamer. Forms an RuvA(8)-RuvB(12)-Holliday junction (HJ) complex. HJ DNA is sandwiched between 2 RuvA tetramers; dsDNA enters through RuvA and exits via RuvB. An RuvB hexamer assembles on each DNA strand where it exits the tetramer. Each RuvB hexamer is contacted by two RuvA subunits (via domain III) on 2 adjacent RuvB subunits; this complex drives branch migration. In the full resolvosome a probable DNA-RuvA(4)-RuvB(12)-RuvC(2) complex forms which resolves the HJ.</text>
</comment>
<comment type="subcellular location">
    <subcellularLocation>
        <location evidence="1">Cytoplasm</location>
    </subcellularLocation>
</comment>
<comment type="domain">
    <text evidence="1">Has 3 domains, the large (RuvB-L) and small ATPase (RuvB-S) domains and the C-terminal head (RuvB-H) domain. The head domain binds DNA, while the ATPase domains jointly bind ATP, ADP or are empty depending on the state of the subunit in the translocation cycle. During a single DNA translocation step the structure of each domain remains the same, but their relative positions change.</text>
</comment>
<comment type="similarity">
    <text evidence="1">Belongs to the RuvB family.</text>
</comment>
<protein>
    <recommendedName>
        <fullName evidence="1">Holliday junction branch migration complex subunit RuvB</fullName>
        <ecNumber evidence="1">3.6.4.-</ecNumber>
    </recommendedName>
</protein>
<reference key="1">
    <citation type="submission" date="2008-02" db="EMBL/GenBank/DDBJ databases">
        <title>Complete sequence of Pseudomonas putida W619.</title>
        <authorList>
            <person name="Copeland A."/>
            <person name="Lucas S."/>
            <person name="Lapidus A."/>
            <person name="Barry K."/>
            <person name="Detter J.C."/>
            <person name="Glavina del Rio T."/>
            <person name="Dalin E."/>
            <person name="Tice H."/>
            <person name="Pitluck S."/>
            <person name="Chain P."/>
            <person name="Malfatti S."/>
            <person name="Shin M."/>
            <person name="Vergez L."/>
            <person name="Schmutz J."/>
            <person name="Larimer F."/>
            <person name="Land M."/>
            <person name="Hauser L."/>
            <person name="Kyrpides N."/>
            <person name="Kim E."/>
            <person name="Taghavi S."/>
            <person name="Vangronsveld D."/>
            <person name="van der Lelie D."/>
            <person name="Richardson P."/>
        </authorList>
    </citation>
    <scope>NUCLEOTIDE SEQUENCE [LARGE SCALE GENOMIC DNA]</scope>
    <source>
        <strain>W619</strain>
    </source>
</reference>
<sequence>MIEADRLIAASGRDREEVQDRAIRPLRLDEYIGQPVVREQMALFIQAARGRNESLDHTLIFGPPGLGKTTLANIIAQEMGVSVKSTSGPILERPGDLAAMLTNLEPHDVLFIDEIHRLSPVVEEVLYPAMEDFQLDIMIGEGPAARSIKLDLPPFTLVGATTRAGMLTNPLRDRFGIVQRLEFYSDKDLATIVSRSANILGLVIEDQGAYEIARRARGTPRIANRLLRRVRDYAEVRGKGQITKAVADLALNLLDVDERGFDHSDRRLLLTMIEKFDGGPVGVDNLAAAISEERHTIEDVLEPYLIQQGYIMRTPRGRVVTRHAYLHFGLNVPGRLGEGADFSEAGDE</sequence>
<name>RUVB_PSEPW</name>
<gene>
    <name evidence="1" type="primary">ruvB</name>
    <name type="ordered locus">PputW619_3998</name>
</gene>
<accession>B1JD70</accession>
<dbReference type="EC" id="3.6.4.-" evidence="1"/>
<dbReference type="EMBL" id="CP000949">
    <property type="protein sequence ID" value="ACA74478.1"/>
    <property type="molecule type" value="Genomic_DNA"/>
</dbReference>
<dbReference type="SMR" id="B1JD70"/>
<dbReference type="STRING" id="390235.PputW619_3998"/>
<dbReference type="KEGG" id="ppw:PputW619_3998"/>
<dbReference type="eggNOG" id="COG2255">
    <property type="taxonomic scope" value="Bacteria"/>
</dbReference>
<dbReference type="HOGENOM" id="CLU_055599_1_0_6"/>
<dbReference type="OrthoDB" id="9804478at2"/>
<dbReference type="GO" id="GO:0005737">
    <property type="term" value="C:cytoplasm"/>
    <property type="evidence" value="ECO:0007669"/>
    <property type="project" value="UniProtKB-SubCell"/>
</dbReference>
<dbReference type="GO" id="GO:0048476">
    <property type="term" value="C:Holliday junction resolvase complex"/>
    <property type="evidence" value="ECO:0007669"/>
    <property type="project" value="UniProtKB-UniRule"/>
</dbReference>
<dbReference type="GO" id="GO:0005524">
    <property type="term" value="F:ATP binding"/>
    <property type="evidence" value="ECO:0007669"/>
    <property type="project" value="UniProtKB-UniRule"/>
</dbReference>
<dbReference type="GO" id="GO:0016887">
    <property type="term" value="F:ATP hydrolysis activity"/>
    <property type="evidence" value="ECO:0007669"/>
    <property type="project" value="InterPro"/>
</dbReference>
<dbReference type="GO" id="GO:0000400">
    <property type="term" value="F:four-way junction DNA binding"/>
    <property type="evidence" value="ECO:0007669"/>
    <property type="project" value="UniProtKB-UniRule"/>
</dbReference>
<dbReference type="GO" id="GO:0009378">
    <property type="term" value="F:four-way junction helicase activity"/>
    <property type="evidence" value="ECO:0007669"/>
    <property type="project" value="InterPro"/>
</dbReference>
<dbReference type="GO" id="GO:0006310">
    <property type="term" value="P:DNA recombination"/>
    <property type="evidence" value="ECO:0007669"/>
    <property type="project" value="UniProtKB-UniRule"/>
</dbReference>
<dbReference type="GO" id="GO:0006281">
    <property type="term" value="P:DNA repair"/>
    <property type="evidence" value="ECO:0007669"/>
    <property type="project" value="UniProtKB-UniRule"/>
</dbReference>
<dbReference type="CDD" id="cd00009">
    <property type="entry name" value="AAA"/>
    <property type="match status" value="1"/>
</dbReference>
<dbReference type="FunFam" id="1.10.10.10:FF:000086">
    <property type="entry name" value="Holliday junction ATP-dependent DNA helicase RuvB"/>
    <property type="match status" value="1"/>
</dbReference>
<dbReference type="FunFam" id="1.10.8.60:FF:000023">
    <property type="entry name" value="Holliday junction ATP-dependent DNA helicase RuvB"/>
    <property type="match status" value="1"/>
</dbReference>
<dbReference type="FunFam" id="3.40.50.300:FF:000073">
    <property type="entry name" value="Holliday junction ATP-dependent DNA helicase RuvB"/>
    <property type="match status" value="1"/>
</dbReference>
<dbReference type="Gene3D" id="1.10.8.60">
    <property type="match status" value="1"/>
</dbReference>
<dbReference type="Gene3D" id="3.40.50.300">
    <property type="entry name" value="P-loop containing nucleotide triphosphate hydrolases"/>
    <property type="match status" value="1"/>
</dbReference>
<dbReference type="Gene3D" id="1.10.10.10">
    <property type="entry name" value="Winged helix-like DNA-binding domain superfamily/Winged helix DNA-binding domain"/>
    <property type="match status" value="1"/>
</dbReference>
<dbReference type="HAMAP" id="MF_00016">
    <property type="entry name" value="DNA_HJ_migration_RuvB"/>
    <property type="match status" value="1"/>
</dbReference>
<dbReference type="InterPro" id="IPR003593">
    <property type="entry name" value="AAA+_ATPase"/>
</dbReference>
<dbReference type="InterPro" id="IPR041445">
    <property type="entry name" value="AAA_lid_4"/>
</dbReference>
<dbReference type="InterPro" id="IPR004605">
    <property type="entry name" value="DNA_helicase_Holl-junc_RuvB"/>
</dbReference>
<dbReference type="InterPro" id="IPR027417">
    <property type="entry name" value="P-loop_NTPase"/>
</dbReference>
<dbReference type="InterPro" id="IPR008824">
    <property type="entry name" value="RuvB-like_N"/>
</dbReference>
<dbReference type="InterPro" id="IPR008823">
    <property type="entry name" value="RuvB_C"/>
</dbReference>
<dbReference type="InterPro" id="IPR036388">
    <property type="entry name" value="WH-like_DNA-bd_sf"/>
</dbReference>
<dbReference type="InterPro" id="IPR036390">
    <property type="entry name" value="WH_DNA-bd_sf"/>
</dbReference>
<dbReference type="NCBIfam" id="NF000868">
    <property type="entry name" value="PRK00080.1"/>
    <property type="match status" value="1"/>
</dbReference>
<dbReference type="NCBIfam" id="TIGR00635">
    <property type="entry name" value="ruvB"/>
    <property type="match status" value="1"/>
</dbReference>
<dbReference type="PANTHER" id="PTHR42848">
    <property type="match status" value="1"/>
</dbReference>
<dbReference type="PANTHER" id="PTHR42848:SF1">
    <property type="entry name" value="HOLLIDAY JUNCTION BRANCH MIGRATION COMPLEX SUBUNIT RUVB"/>
    <property type="match status" value="1"/>
</dbReference>
<dbReference type="Pfam" id="PF17864">
    <property type="entry name" value="AAA_lid_4"/>
    <property type="match status" value="1"/>
</dbReference>
<dbReference type="Pfam" id="PF05491">
    <property type="entry name" value="RuvB_C"/>
    <property type="match status" value="1"/>
</dbReference>
<dbReference type="Pfam" id="PF05496">
    <property type="entry name" value="RuvB_N"/>
    <property type="match status" value="1"/>
</dbReference>
<dbReference type="SMART" id="SM00382">
    <property type="entry name" value="AAA"/>
    <property type="match status" value="1"/>
</dbReference>
<dbReference type="SUPFAM" id="SSF52540">
    <property type="entry name" value="P-loop containing nucleoside triphosphate hydrolases"/>
    <property type="match status" value="1"/>
</dbReference>
<dbReference type="SUPFAM" id="SSF46785">
    <property type="entry name" value="Winged helix' DNA-binding domain"/>
    <property type="match status" value="1"/>
</dbReference>